<comment type="function">
    <text evidence="1">Catalyzes the transfer of an acyl group from acyl-phosphate (acyl-PO(4)) to glycerol-3-phosphate (G3P) to form lysophosphatidic acid (LPA). This enzyme utilizes acyl-phosphate as fatty acyl donor, but not acyl-CoA or acyl-ACP.</text>
</comment>
<comment type="catalytic activity">
    <reaction evidence="1">
        <text>an acyl phosphate + sn-glycerol 3-phosphate = a 1-acyl-sn-glycero-3-phosphate + phosphate</text>
        <dbReference type="Rhea" id="RHEA:34075"/>
        <dbReference type="ChEBI" id="CHEBI:43474"/>
        <dbReference type="ChEBI" id="CHEBI:57597"/>
        <dbReference type="ChEBI" id="CHEBI:57970"/>
        <dbReference type="ChEBI" id="CHEBI:59918"/>
        <dbReference type="EC" id="2.3.1.275"/>
    </reaction>
</comment>
<comment type="pathway">
    <text evidence="1">Lipid metabolism; phospholipid metabolism.</text>
</comment>
<comment type="subunit">
    <text evidence="1">Probably interacts with PlsX.</text>
</comment>
<comment type="subcellular location">
    <subcellularLocation>
        <location evidence="1">Cell inner membrane</location>
        <topology evidence="1">Multi-pass membrane protein</topology>
    </subcellularLocation>
</comment>
<comment type="similarity">
    <text evidence="1">Belongs to the PlsY family.</text>
</comment>
<sequence>MSQLTLTLLMIVAAYLAGSVSSAVLVCRMRGLPDPRSQGSGNPGATNVLRIGGASSAAMVLFFDMLKGALPTYLAYLMGIDAISLGLIAIAACLGHIYPIFFGFKGGKGVATAFGAMAPIGDDLAICLMASWVVLVLISRYSSLAAIITALLAPLYTWWLDDRFTIPVAMLSTLIIIRHKENIQRLLKGEESKVSRKKRPKAP</sequence>
<proteinExistence type="inferred from homology"/>
<feature type="chain" id="PRO_1000064227" description="Glycerol-3-phosphate acyltransferase">
    <location>
        <begin position="1"/>
        <end position="203"/>
    </location>
</feature>
<feature type="transmembrane region" description="Helical" evidence="1">
    <location>
        <begin position="6"/>
        <end position="26"/>
    </location>
</feature>
<feature type="transmembrane region" description="Helical" evidence="1">
    <location>
        <begin position="82"/>
        <end position="102"/>
    </location>
</feature>
<feature type="transmembrane region" description="Helical" evidence="1">
    <location>
        <begin position="118"/>
        <end position="138"/>
    </location>
</feature>
<feature type="transmembrane region" description="Helical" evidence="1">
    <location>
        <begin position="141"/>
        <end position="161"/>
    </location>
</feature>
<evidence type="ECO:0000255" key="1">
    <source>
        <dbReference type="HAMAP-Rule" id="MF_01043"/>
    </source>
</evidence>
<protein>
    <recommendedName>
        <fullName evidence="1">Glycerol-3-phosphate acyltransferase</fullName>
    </recommendedName>
    <alternativeName>
        <fullName evidence="1">Acyl-PO4 G3P acyltransferase</fullName>
    </alternativeName>
    <alternativeName>
        <fullName evidence="1">Acyl-phosphate--glycerol-3-phosphate acyltransferase</fullName>
    </alternativeName>
    <alternativeName>
        <fullName evidence="1">G3P acyltransferase</fullName>
        <shortName evidence="1">GPAT</shortName>
        <ecNumber evidence="1">2.3.1.275</ecNumber>
    </alternativeName>
    <alternativeName>
        <fullName evidence="1">Lysophosphatidic acid synthase</fullName>
        <shortName evidence="1">LPA synthase</shortName>
    </alternativeName>
</protein>
<reference key="1">
    <citation type="submission" date="2006-08" db="EMBL/GenBank/DDBJ databases">
        <title>Complete sequence of chromosome 1 of Shewanella sp. MR-7.</title>
        <authorList>
            <person name="Copeland A."/>
            <person name="Lucas S."/>
            <person name="Lapidus A."/>
            <person name="Barry K."/>
            <person name="Detter J.C."/>
            <person name="Glavina del Rio T."/>
            <person name="Hammon N."/>
            <person name="Israni S."/>
            <person name="Dalin E."/>
            <person name="Tice H."/>
            <person name="Pitluck S."/>
            <person name="Kiss H."/>
            <person name="Brettin T."/>
            <person name="Bruce D."/>
            <person name="Han C."/>
            <person name="Tapia R."/>
            <person name="Gilna P."/>
            <person name="Schmutz J."/>
            <person name="Larimer F."/>
            <person name="Land M."/>
            <person name="Hauser L."/>
            <person name="Kyrpides N."/>
            <person name="Mikhailova N."/>
            <person name="Nealson K."/>
            <person name="Konstantinidis K."/>
            <person name="Klappenbach J."/>
            <person name="Tiedje J."/>
            <person name="Richardson P."/>
        </authorList>
    </citation>
    <scope>NUCLEOTIDE SEQUENCE [LARGE SCALE GENOMIC DNA]</scope>
    <source>
        <strain>MR-7</strain>
    </source>
</reference>
<name>PLSY_SHESR</name>
<organism>
    <name type="scientific">Shewanella sp. (strain MR-7)</name>
    <dbReference type="NCBI Taxonomy" id="60481"/>
    <lineage>
        <taxon>Bacteria</taxon>
        <taxon>Pseudomonadati</taxon>
        <taxon>Pseudomonadota</taxon>
        <taxon>Gammaproteobacteria</taxon>
        <taxon>Alteromonadales</taxon>
        <taxon>Shewanellaceae</taxon>
        <taxon>Shewanella</taxon>
    </lineage>
</organism>
<accession>Q0HSD6</accession>
<gene>
    <name evidence="1" type="primary">plsY</name>
    <name type="ordered locus">Shewmr7_2985</name>
</gene>
<keyword id="KW-0997">Cell inner membrane</keyword>
<keyword id="KW-1003">Cell membrane</keyword>
<keyword id="KW-0444">Lipid biosynthesis</keyword>
<keyword id="KW-0443">Lipid metabolism</keyword>
<keyword id="KW-0472">Membrane</keyword>
<keyword id="KW-0594">Phospholipid biosynthesis</keyword>
<keyword id="KW-1208">Phospholipid metabolism</keyword>
<keyword id="KW-0808">Transferase</keyword>
<keyword id="KW-0812">Transmembrane</keyword>
<keyword id="KW-1133">Transmembrane helix</keyword>
<dbReference type="EC" id="2.3.1.275" evidence="1"/>
<dbReference type="EMBL" id="CP000444">
    <property type="protein sequence ID" value="ABI43969.1"/>
    <property type="molecule type" value="Genomic_DNA"/>
</dbReference>
<dbReference type="SMR" id="Q0HSD6"/>
<dbReference type="KEGG" id="shm:Shewmr7_2985"/>
<dbReference type="HOGENOM" id="CLU_081254_0_2_6"/>
<dbReference type="UniPathway" id="UPA00085"/>
<dbReference type="GO" id="GO:0005886">
    <property type="term" value="C:plasma membrane"/>
    <property type="evidence" value="ECO:0007669"/>
    <property type="project" value="UniProtKB-SubCell"/>
</dbReference>
<dbReference type="GO" id="GO:0043772">
    <property type="term" value="F:acyl-phosphate glycerol-3-phosphate acyltransferase activity"/>
    <property type="evidence" value="ECO:0007669"/>
    <property type="project" value="UniProtKB-UniRule"/>
</dbReference>
<dbReference type="GO" id="GO:0008654">
    <property type="term" value="P:phospholipid biosynthetic process"/>
    <property type="evidence" value="ECO:0007669"/>
    <property type="project" value="UniProtKB-UniRule"/>
</dbReference>
<dbReference type="HAMAP" id="MF_01043">
    <property type="entry name" value="PlsY"/>
    <property type="match status" value="1"/>
</dbReference>
<dbReference type="InterPro" id="IPR003811">
    <property type="entry name" value="G3P_acylTferase_PlsY"/>
</dbReference>
<dbReference type="NCBIfam" id="TIGR00023">
    <property type="entry name" value="glycerol-3-phosphate 1-O-acyltransferase PlsY"/>
    <property type="match status" value="1"/>
</dbReference>
<dbReference type="PANTHER" id="PTHR30309:SF0">
    <property type="entry name" value="GLYCEROL-3-PHOSPHATE ACYLTRANSFERASE-RELATED"/>
    <property type="match status" value="1"/>
</dbReference>
<dbReference type="PANTHER" id="PTHR30309">
    <property type="entry name" value="INNER MEMBRANE PROTEIN YGIH"/>
    <property type="match status" value="1"/>
</dbReference>
<dbReference type="Pfam" id="PF02660">
    <property type="entry name" value="G3P_acyltransf"/>
    <property type="match status" value="1"/>
</dbReference>
<dbReference type="SMART" id="SM01207">
    <property type="entry name" value="G3P_acyltransf"/>
    <property type="match status" value="1"/>
</dbReference>